<comment type="function">
    <text evidence="1">Produces ATP from ADP in the presence of a proton gradient across the membrane.</text>
</comment>
<comment type="similarity">
    <text evidence="1">Belongs to the V-ATPase D subunit family.</text>
</comment>
<comment type="sequence caution" evidence="2">
    <conflict type="erroneous initiation">
        <sequence resource="EMBL-CDS" id="AAT86315"/>
    </conflict>
</comment>
<name>VATD_STRP6</name>
<feature type="chain" id="PRO_0000144270" description="V-type ATP synthase subunit D">
    <location>
        <begin position="1"/>
        <end position="208"/>
    </location>
</feature>
<gene>
    <name evidence="1" type="primary">atpD</name>
    <name type="ordered locus">M6_Spy0180</name>
</gene>
<organism>
    <name type="scientific">Streptococcus pyogenes serotype M6 (strain ATCC BAA-946 / MGAS10394)</name>
    <dbReference type="NCBI Taxonomy" id="286636"/>
    <lineage>
        <taxon>Bacteria</taxon>
        <taxon>Bacillati</taxon>
        <taxon>Bacillota</taxon>
        <taxon>Bacilli</taxon>
        <taxon>Lactobacillales</taxon>
        <taxon>Streptococcaceae</taxon>
        <taxon>Streptococcus</taxon>
    </lineage>
</organism>
<accession>Q5XE48</accession>
<evidence type="ECO:0000255" key="1">
    <source>
        <dbReference type="HAMAP-Rule" id="MF_00271"/>
    </source>
</evidence>
<evidence type="ECO:0000305" key="2"/>
<dbReference type="EMBL" id="CP000003">
    <property type="protein sequence ID" value="AAT86315.1"/>
    <property type="status" value="ALT_INIT"/>
    <property type="molecule type" value="Genomic_DNA"/>
</dbReference>
<dbReference type="RefSeq" id="WP_011017277.1">
    <property type="nucleotide sequence ID" value="NC_006086.1"/>
</dbReference>
<dbReference type="SMR" id="Q5XE48"/>
<dbReference type="KEGG" id="spa:M6_Spy0180"/>
<dbReference type="HOGENOM" id="CLU_069688_2_1_9"/>
<dbReference type="Proteomes" id="UP000001167">
    <property type="component" value="Chromosome"/>
</dbReference>
<dbReference type="GO" id="GO:0005524">
    <property type="term" value="F:ATP binding"/>
    <property type="evidence" value="ECO:0007669"/>
    <property type="project" value="UniProtKB-UniRule"/>
</dbReference>
<dbReference type="GO" id="GO:0046933">
    <property type="term" value="F:proton-transporting ATP synthase activity, rotational mechanism"/>
    <property type="evidence" value="ECO:0007669"/>
    <property type="project" value="UniProtKB-UniRule"/>
</dbReference>
<dbReference type="GO" id="GO:0046961">
    <property type="term" value="F:proton-transporting ATPase activity, rotational mechanism"/>
    <property type="evidence" value="ECO:0007669"/>
    <property type="project" value="InterPro"/>
</dbReference>
<dbReference type="GO" id="GO:0042777">
    <property type="term" value="P:proton motive force-driven plasma membrane ATP synthesis"/>
    <property type="evidence" value="ECO:0007669"/>
    <property type="project" value="UniProtKB-UniRule"/>
</dbReference>
<dbReference type="FunFam" id="1.10.287.3240:FF:000007">
    <property type="entry name" value="V-type ATP synthase subunit D"/>
    <property type="match status" value="1"/>
</dbReference>
<dbReference type="Gene3D" id="1.10.287.3240">
    <property type="match status" value="1"/>
</dbReference>
<dbReference type="HAMAP" id="MF_00271">
    <property type="entry name" value="ATP_synth_D_arch"/>
    <property type="match status" value="1"/>
</dbReference>
<dbReference type="InterPro" id="IPR002699">
    <property type="entry name" value="V_ATPase_D"/>
</dbReference>
<dbReference type="NCBIfam" id="NF001546">
    <property type="entry name" value="PRK00373.1-5"/>
    <property type="match status" value="1"/>
</dbReference>
<dbReference type="NCBIfam" id="TIGR00309">
    <property type="entry name" value="V_ATPase_subD"/>
    <property type="match status" value="1"/>
</dbReference>
<dbReference type="PANTHER" id="PTHR11671">
    <property type="entry name" value="V-TYPE ATP SYNTHASE SUBUNIT D"/>
    <property type="match status" value="1"/>
</dbReference>
<dbReference type="Pfam" id="PF01813">
    <property type="entry name" value="ATP-synt_D"/>
    <property type="match status" value="1"/>
</dbReference>
<reference key="1">
    <citation type="journal article" date="2004" name="J. Infect. Dis.">
        <title>Progress toward characterization of the group A Streptococcus metagenome: complete genome sequence of a macrolide-resistant serotype M6 strain.</title>
        <authorList>
            <person name="Banks D.J."/>
            <person name="Porcella S.F."/>
            <person name="Barbian K.D."/>
            <person name="Beres S.B."/>
            <person name="Philips L.E."/>
            <person name="Voyich J.M."/>
            <person name="DeLeo F.R."/>
            <person name="Martin J.M."/>
            <person name="Somerville G.A."/>
            <person name="Musser J.M."/>
        </authorList>
    </citation>
    <scope>NUCLEOTIDE SEQUENCE [LARGE SCALE GENOMIC DNA]</scope>
    <source>
        <strain>ATCC BAA-946 / MGAS10394</strain>
    </source>
</reference>
<sequence>MARLNVKPTRMELSNLKNRLKTATRGHKLLKDKRDELMRRFVDLIRENNELRQTLEKELAANMKEFVLAKASENSLMVEELFAVPVHEVTLWIDIENIMSVNVPKFHVQSNTAREQEQGEFAYSYLSSNSEMDNTIQKTKELLEKLLRLAEVEKTCQLMADDIEKTRRRVNGLEYSIIPQLEETIHYIELKLEEAERASLVRIMKITS</sequence>
<keyword id="KW-0066">ATP synthesis</keyword>
<keyword id="KW-0375">Hydrogen ion transport</keyword>
<keyword id="KW-0406">Ion transport</keyword>
<keyword id="KW-0813">Transport</keyword>
<proteinExistence type="inferred from homology"/>
<protein>
    <recommendedName>
        <fullName evidence="1">V-type ATP synthase subunit D</fullName>
    </recommendedName>
    <alternativeName>
        <fullName evidence="1">V-ATPase subunit D</fullName>
    </alternativeName>
</protein>